<feature type="chain" id="PRO_0000301338" description="Phosphoglucosamine mutase">
    <location>
        <begin position="1"/>
        <end position="453"/>
    </location>
</feature>
<feature type="active site" description="Phosphoserine intermediate" evidence="1">
    <location>
        <position position="108"/>
    </location>
</feature>
<feature type="binding site" description="via phosphate group" evidence="1">
    <location>
        <position position="108"/>
    </location>
    <ligand>
        <name>Mg(2+)</name>
        <dbReference type="ChEBI" id="CHEBI:18420"/>
    </ligand>
</feature>
<feature type="binding site" evidence="1">
    <location>
        <position position="247"/>
    </location>
    <ligand>
        <name>Mg(2+)</name>
        <dbReference type="ChEBI" id="CHEBI:18420"/>
    </ligand>
</feature>
<feature type="binding site" evidence="1">
    <location>
        <position position="249"/>
    </location>
    <ligand>
        <name>Mg(2+)</name>
        <dbReference type="ChEBI" id="CHEBI:18420"/>
    </ligand>
</feature>
<feature type="binding site" evidence="1">
    <location>
        <position position="251"/>
    </location>
    <ligand>
        <name>Mg(2+)</name>
        <dbReference type="ChEBI" id="CHEBI:18420"/>
    </ligand>
</feature>
<feature type="modified residue" description="Phosphoserine" evidence="1">
    <location>
        <position position="108"/>
    </location>
</feature>
<gene>
    <name evidence="1" type="primary">glmM</name>
    <name type="ordered locus">Mfla_0785</name>
</gene>
<name>GLMM_METFK</name>
<organism>
    <name type="scientific">Methylobacillus flagellatus (strain ATCC 51484 / DSM 6875 / VKM B-1610 / KT)</name>
    <dbReference type="NCBI Taxonomy" id="265072"/>
    <lineage>
        <taxon>Bacteria</taxon>
        <taxon>Pseudomonadati</taxon>
        <taxon>Pseudomonadota</taxon>
        <taxon>Betaproteobacteria</taxon>
        <taxon>Nitrosomonadales</taxon>
        <taxon>Methylophilaceae</taxon>
        <taxon>Methylobacillus</taxon>
    </lineage>
</organism>
<protein>
    <recommendedName>
        <fullName evidence="1">Phosphoglucosamine mutase</fullName>
        <ecNumber evidence="1">5.4.2.10</ecNumber>
    </recommendedName>
</protein>
<comment type="function">
    <text evidence="1">Catalyzes the conversion of glucosamine-6-phosphate to glucosamine-1-phosphate.</text>
</comment>
<comment type="catalytic activity">
    <reaction evidence="1">
        <text>alpha-D-glucosamine 1-phosphate = D-glucosamine 6-phosphate</text>
        <dbReference type="Rhea" id="RHEA:23424"/>
        <dbReference type="ChEBI" id="CHEBI:58516"/>
        <dbReference type="ChEBI" id="CHEBI:58725"/>
        <dbReference type="EC" id="5.4.2.10"/>
    </reaction>
</comment>
<comment type="cofactor">
    <cofactor evidence="1">
        <name>Mg(2+)</name>
        <dbReference type="ChEBI" id="CHEBI:18420"/>
    </cofactor>
    <text evidence="1">Binds 1 Mg(2+) ion per subunit.</text>
</comment>
<comment type="PTM">
    <text evidence="1">Activated by phosphorylation.</text>
</comment>
<comment type="similarity">
    <text evidence="1">Belongs to the phosphohexose mutase family.</text>
</comment>
<keyword id="KW-0413">Isomerase</keyword>
<keyword id="KW-0460">Magnesium</keyword>
<keyword id="KW-0479">Metal-binding</keyword>
<keyword id="KW-0597">Phosphoprotein</keyword>
<keyword id="KW-1185">Reference proteome</keyword>
<proteinExistence type="inferred from homology"/>
<accession>Q1H384</accession>
<evidence type="ECO:0000255" key="1">
    <source>
        <dbReference type="HAMAP-Rule" id="MF_01554"/>
    </source>
</evidence>
<sequence length="453" mass="48525">MSRKYFGTDGVRGKVGTFPITPDFVMRLGYAAGRVLTRMDHHLVPGTKPLVIIGKDTRISGYMFETALVSGLCAGGVNVRITGPLPTPAIAHVTRAQRAQAGIVISASHNPFDDNGIKFFSAQGTKLPDEVELAIEAELDQPMELVPTEQIGRVKRIDDAAGRYIEFCKSTFPNALDLRGLKIVLDCANGATYHVAPPVFHELGAEVISIGTQPNGLNINLNVGSTHPESLQQAVVEHQADLGIAFDGDGDRVVMADNQGQLLDGDQLLYIIASHRHQRGRLGGGVVGTLMTNLALEHALGKEGIPFQRAKVGDRYVLELLNANEWQLGGENSGHILCLDKHSSGDGIIAALQVLHALRASGLSLADWAKRLPLYPQVLINVKVAQRIDLDSNTALQAAVTSAEGALKGTGRVLLRASGTEPKIRVMVEGQDRPLVQRLAEEIAAVVQQEAAS</sequence>
<dbReference type="EC" id="5.4.2.10" evidence="1"/>
<dbReference type="EMBL" id="CP000284">
    <property type="protein sequence ID" value="ABE49053.1"/>
    <property type="molecule type" value="Genomic_DNA"/>
</dbReference>
<dbReference type="RefSeq" id="WP_011479150.1">
    <property type="nucleotide sequence ID" value="NC_007947.1"/>
</dbReference>
<dbReference type="SMR" id="Q1H384"/>
<dbReference type="STRING" id="265072.Mfla_0785"/>
<dbReference type="KEGG" id="mfa:Mfla_0785"/>
<dbReference type="eggNOG" id="COG1109">
    <property type="taxonomic scope" value="Bacteria"/>
</dbReference>
<dbReference type="HOGENOM" id="CLU_016950_7_0_4"/>
<dbReference type="OrthoDB" id="9803322at2"/>
<dbReference type="Proteomes" id="UP000002440">
    <property type="component" value="Chromosome"/>
</dbReference>
<dbReference type="GO" id="GO:0005829">
    <property type="term" value="C:cytosol"/>
    <property type="evidence" value="ECO:0007669"/>
    <property type="project" value="TreeGrafter"/>
</dbReference>
<dbReference type="GO" id="GO:0000287">
    <property type="term" value="F:magnesium ion binding"/>
    <property type="evidence" value="ECO:0007669"/>
    <property type="project" value="UniProtKB-UniRule"/>
</dbReference>
<dbReference type="GO" id="GO:0008966">
    <property type="term" value="F:phosphoglucosamine mutase activity"/>
    <property type="evidence" value="ECO:0007669"/>
    <property type="project" value="UniProtKB-UniRule"/>
</dbReference>
<dbReference type="GO" id="GO:0004615">
    <property type="term" value="F:phosphomannomutase activity"/>
    <property type="evidence" value="ECO:0007669"/>
    <property type="project" value="TreeGrafter"/>
</dbReference>
<dbReference type="GO" id="GO:0005975">
    <property type="term" value="P:carbohydrate metabolic process"/>
    <property type="evidence" value="ECO:0007669"/>
    <property type="project" value="InterPro"/>
</dbReference>
<dbReference type="GO" id="GO:0009252">
    <property type="term" value="P:peptidoglycan biosynthetic process"/>
    <property type="evidence" value="ECO:0007669"/>
    <property type="project" value="TreeGrafter"/>
</dbReference>
<dbReference type="GO" id="GO:0006048">
    <property type="term" value="P:UDP-N-acetylglucosamine biosynthetic process"/>
    <property type="evidence" value="ECO:0007669"/>
    <property type="project" value="TreeGrafter"/>
</dbReference>
<dbReference type="CDD" id="cd05802">
    <property type="entry name" value="GlmM"/>
    <property type="match status" value="1"/>
</dbReference>
<dbReference type="FunFam" id="3.30.310.50:FF:000001">
    <property type="entry name" value="Phosphoglucosamine mutase"/>
    <property type="match status" value="1"/>
</dbReference>
<dbReference type="FunFam" id="3.40.120.10:FF:000001">
    <property type="entry name" value="Phosphoglucosamine mutase"/>
    <property type="match status" value="1"/>
</dbReference>
<dbReference type="FunFam" id="3.40.120.10:FF:000003">
    <property type="entry name" value="Phosphoglucosamine mutase"/>
    <property type="match status" value="1"/>
</dbReference>
<dbReference type="Gene3D" id="3.40.120.10">
    <property type="entry name" value="Alpha-D-Glucose-1,6-Bisphosphate, subunit A, domain 3"/>
    <property type="match status" value="3"/>
</dbReference>
<dbReference type="Gene3D" id="3.30.310.50">
    <property type="entry name" value="Alpha-D-phosphohexomutase, C-terminal domain"/>
    <property type="match status" value="1"/>
</dbReference>
<dbReference type="HAMAP" id="MF_01554_B">
    <property type="entry name" value="GlmM_B"/>
    <property type="match status" value="1"/>
</dbReference>
<dbReference type="InterPro" id="IPR005844">
    <property type="entry name" value="A-D-PHexomutase_a/b/a-I"/>
</dbReference>
<dbReference type="InterPro" id="IPR016055">
    <property type="entry name" value="A-D-PHexomutase_a/b/a-I/II/III"/>
</dbReference>
<dbReference type="InterPro" id="IPR005845">
    <property type="entry name" value="A-D-PHexomutase_a/b/a-II"/>
</dbReference>
<dbReference type="InterPro" id="IPR005846">
    <property type="entry name" value="A-D-PHexomutase_a/b/a-III"/>
</dbReference>
<dbReference type="InterPro" id="IPR005843">
    <property type="entry name" value="A-D-PHexomutase_C"/>
</dbReference>
<dbReference type="InterPro" id="IPR036900">
    <property type="entry name" value="A-D-PHexomutase_C_sf"/>
</dbReference>
<dbReference type="InterPro" id="IPR016066">
    <property type="entry name" value="A-D-PHexomutase_CS"/>
</dbReference>
<dbReference type="InterPro" id="IPR005841">
    <property type="entry name" value="Alpha-D-phosphohexomutase_SF"/>
</dbReference>
<dbReference type="InterPro" id="IPR006352">
    <property type="entry name" value="GlmM_bact"/>
</dbReference>
<dbReference type="InterPro" id="IPR050060">
    <property type="entry name" value="Phosphoglucosamine_mutase"/>
</dbReference>
<dbReference type="NCBIfam" id="TIGR01455">
    <property type="entry name" value="glmM"/>
    <property type="match status" value="1"/>
</dbReference>
<dbReference type="NCBIfam" id="NF008139">
    <property type="entry name" value="PRK10887.1"/>
    <property type="match status" value="1"/>
</dbReference>
<dbReference type="PANTHER" id="PTHR42946:SF1">
    <property type="entry name" value="PHOSPHOGLUCOMUTASE (ALPHA-D-GLUCOSE-1,6-BISPHOSPHATE-DEPENDENT)"/>
    <property type="match status" value="1"/>
</dbReference>
<dbReference type="PANTHER" id="PTHR42946">
    <property type="entry name" value="PHOSPHOHEXOSE MUTASE"/>
    <property type="match status" value="1"/>
</dbReference>
<dbReference type="Pfam" id="PF02878">
    <property type="entry name" value="PGM_PMM_I"/>
    <property type="match status" value="1"/>
</dbReference>
<dbReference type="Pfam" id="PF02879">
    <property type="entry name" value="PGM_PMM_II"/>
    <property type="match status" value="1"/>
</dbReference>
<dbReference type="Pfam" id="PF02880">
    <property type="entry name" value="PGM_PMM_III"/>
    <property type="match status" value="1"/>
</dbReference>
<dbReference type="Pfam" id="PF00408">
    <property type="entry name" value="PGM_PMM_IV"/>
    <property type="match status" value="1"/>
</dbReference>
<dbReference type="PRINTS" id="PR00509">
    <property type="entry name" value="PGMPMM"/>
</dbReference>
<dbReference type="SUPFAM" id="SSF55957">
    <property type="entry name" value="Phosphoglucomutase, C-terminal domain"/>
    <property type="match status" value="1"/>
</dbReference>
<dbReference type="SUPFAM" id="SSF53738">
    <property type="entry name" value="Phosphoglucomutase, first 3 domains"/>
    <property type="match status" value="3"/>
</dbReference>
<dbReference type="PROSITE" id="PS00710">
    <property type="entry name" value="PGM_PMM"/>
    <property type="match status" value="1"/>
</dbReference>
<reference key="1">
    <citation type="submission" date="2006-03" db="EMBL/GenBank/DDBJ databases">
        <title>Complete sequence of Methylobacillus flagellatus KT.</title>
        <authorList>
            <consortium name="US DOE Joint Genome Institute"/>
            <person name="Copeland A."/>
            <person name="Lucas S."/>
            <person name="Lapidus A."/>
            <person name="Barry K."/>
            <person name="Detter J.C."/>
            <person name="Glavina del Rio T."/>
            <person name="Hammon N."/>
            <person name="Israni S."/>
            <person name="Dalin E."/>
            <person name="Tice H."/>
            <person name="Pitluck S."/>
            <person name="Brettin T."/>
            <person name="Bruce D."/>
            <person name="Han C."/>
            <person name="Tapia R."/>
            <person name="Saunders E."/>
            <person name="Gilna P."/>
            <person name="Schmutz J."/>
            <person name="Larimer F."/>
            <person name="Land M."/>
            <person name="Kyrpides N."/>
            <person name="Anderson I."/>
            <person name="Richardson P."/>
        </authorList>
    </citation>
    <scope>NUCLEOTIDE SEQUENCE [LARGE SCALE GENOMIC DNA]</scope>
    <source>
        <strain>ATCC 51484 / DSM 6875 / VKM B-1610 / KT</strain>
    </source>
</reference>